<proteinExistence type="evidence at protein level"/>
<reference evidence="10" key="1">
    <citation type="submission" date="2004-06" db="EMBL/GenBank/DDBJ databases">
        <title>Molecular identification of the pigment dispersing factor (PDF) receptor in Drosophila melanogaster.</title>
        <authorList>
            <person name="Mertens I."/>
            <person name="Vandingenen A."/>
            <person name="De Loof A."/>
            <person name="Schoofs L."/>
        </authorList>
    </citation>
    <scope>NUCLEOTIDE SEQUENCE [MRNA]</scope>
</reference>
<reference key="2">
    <citation type="journal article" date="2000" name="Science">
        <title>The genome sequence of Drosophila melanogaster.</title>
        <authorList>
            <person name="Adams M.D."/>
            <person name="Celniker S.E."/>
            <person name="Holt R.A."/>
            <person name="Evans C.A."/>
            <person name="Gocayne J.D."/>
            <person name="Amanatides P.G."/>
            <person name="Scherer S.E."/>
            <person name="Li P.W."/>
            <person name="Hoskins R.A."/>
            <person name="Galle R.F."/>
            <person name="George R.A."/>
            <person name="Lewis S.E."/>
            <person name="Richards S."/>
            <person name="Ashburner M."/>
            <person name="Henderson S.N."/>
            <person name="Sutton G.G."/>
            <person name="Wortman J.R."/>
            <person name="Yandell M.D."/>
            <person name="Zhang Q."/>
            <person name="Chen L.X."/>
            <person name="Brandon R.C."/>
            <person name="Rogers Y.-H.C."/>
            <person name="Blazej R.G."/>
            <person name="Champe M."/>
            <person name="Pfeiffer B.D."/>
            <person name="Wan K.H."/>
            <person name="Doyle C."/>
            <person name="Baxter E.G."/>
            <person name="Helt G."/>
            <person name="Nelson C.R."/>
            <person name="Miklos G.L.G."/>
            <person name="Abril J.F."/>
            <person name="Agbayani A."/>
            <person name="An H.-J."/>
            <person name="Andrews-Pfannkoch C."/>
            <person name="Baldwin D."/>
            <person name="Ballew R.M."/>
            <person name="Basu A."/>
            <person name="Baxendale J."/>
            <person name="Bayraktaroglu L."/>
            <person name="Beasley E.M."/>
            <person name="Beeson K.Y."/>
            <person name="Benos P.V."/>
            <person name="Berman B.P."/>
            <person name="Bhandari D."/>
            <person name="Bolshakov S."/>
            <person name="Borkova D."/>
            <person name="Botchan M.R."/>
            <person name="Bouck J."/>
            <person name="Brokstein P."/>
            <person name="Brottier P."/>
            <person name="Burtis K.C."/>
            <person name="Busam D.A."/>
            <person name="Butler H."/>
            <person name="Cadieu E."/>
            <person name="Center A."/>
            <person name="Chandra I."/>
            <person name="Cherry J.M."/>
            <person name="Cawley S."/>
            <person name="Dahlke C."/>
            <person name="Davenport L.B."/>
            <person name="Davies P."/>
            <person name="de Pablos B."/>
            <person name="Delcher A."/>
            <person name="Deng Z."/>
            <person name="Mays A.D."/>
            <person name="Dew I."/>
            <person name="Dietz S.M."/>
            <person name="Dodson K."/>
            <person name="Doup L.E."/>
            <person name="Downes M."/>
            <person name="Dugan-Rocha S."/>
            <person name="Dunkov B.C."/>
            <person name="Dunn P."/>
            <person name="Durbin K.J."/>
            <person name="Evangelista C.C."/>
            <person name="Ferraz C."/>
            <person name="Ferriera S."/>
            <person name="Fleischmann W."/>
            <person name="Fosler C."/>
            <person name="Gabrielian A.E."/>
            <person name="Garg N.S."/>
            <person name="Gelbart W.M."/>
            <person name="Glasser K."/>
            <person name="Glodek A."/>
            <person name="Gong F."/>
            <person name="Gorrell J.H."/>
            <person name="Gu Z."/>
            <person name="Guan P."/>
            <person name="Harris M."/>
            <person name="Harris N.L."/>
            <person name="Harvey D.A."/>
            <person name="Heiman T.J."/>
            <person name="Hernandez J.R."/>
            <person name="Houck J."/>
            <person name="Hostin D."/>
            <person name="Houston K.A."/>
            <person name="Howland T.J."/>
            <person name="Wei M.-H."/>
            <person name="Ibegwam C."/>
            <person name="Jalali M."/>
            <person name="Kalush F."/>
            <person name="Karpen G.H."/>
            <person name="Ke Z."/>
            <person name="Kennison J.A."/>
            <person name="Ketchum K.A."/>
            <person name="Kimmel B.E."/>
            <person name="Kodira C.D."/>
            <person name="Kraft C.L."/>
            <person name="Kravitz S."/>
            <person name="Kulp D."/>
            <person name="Lai Z."/>
            <person name="Lasko P."/>
            <person name="Lei Y."/>
            <person name="Levitsky A.A."/>
            <person name="Li J.H."/>
            <person name="Li Z."/>
            <person name="Liang Y."/>
            <person name="Lin X."/>
            <person name="Liu X."/>
            <person name="Mattei B."/>
            <person name="McIntosh T.C."/>
            <person name="McLeod M.P."/>
            <person name="McPherson D."/>
            <person name="Merkulov G."/>
            <person name="Milshina N.V."/>
            <person name="Mobarry C."/>
            <person name="Morris J."/>
            <person name="Moshrefi A."/>
            <person name="Mount S.M."/>
            <person name="Moy M."/>
            <person name="Murphy B."/>
            <person name="Murphy L."/>
            <person name="Muzny D.M."/>
            <person name="Nelson D.L."/>
            <person name="Nelson D.R."/>
            <person name="Nelson K.A."/>
            <person name="Nixon K."/>
            <person name="Nusskern D.R."/>
            <person name="Pacleb J.M."/>
            <person name="Palazzolo M."/>
            <person name="Pittman G.S."/>
            <person name="Pan S."/>
            <person name="Pollard J."/>
            <person name="Puri V."/>
            <person name="Reese M.G."/>
            <person name="Reinert K."/>
            <person name="Remington K."/>
            <person name="Saunders R.D.C."/>
            <person name="Scheeler F."/>
            <person name="Shen H."/>
            <person name="Shue B.C."/>
            <person name="Siden-Kiamos I."/>
            <person name="Simpson M."/>
            <person name="Skupski M.P."/>
            <person name="Smith T.J."/>
            <person name="Spier E."/>
            <person name="Spradling A.C."/>
            <person name="Stapleton M."/>
            <person name="Strong R."/>
            <person name="Sun E."/>
            <person name="Svirskas R."/>
            <person name="Tector C."/>
            <person name="Turner R."/>
            <person name="Venter E."/>
            <person name="Wang A.H."/>
            <person name="Wang X."/>
            <person name="Wang Z.-Y."/>
            <person name="Wassarman D.A."/>
            <person name="Weinstock G.M."/>
            <person name="Weissenbach J."/>
            <person name="Williams S.M."/>
            <person name="Woodage T."/>
            <person name="Worley K.C."/>
            <person name="Wu D."/>
            <person name="Yang S."/>
            <person name="Yao Q.A."/>
            <person name="Ye J."/>
            <person name="Yeh R.-F."/>
            <person name="Zaveri J.S."/>
            <person name="Zhan M."/>
            <person name="Zhang G."/>
            <person name="Zhao Q."/>
            <person name="Zheng L."/>
            <person name="Zheng X.H."/>
            <person name="Zhong F.N."/>
            <person name="Zhong W."/>
            <person name="Zhou X."/>
            <person name="Zhu S.C."/>
            <person name="Zhu X."/>
            <person name="Smith H.O."/>
            <person name="Gibbs R.A."/>
            <person name="Myers E.W."/>
            <person name="Rubin G.M."/>
            <person name="Venter J.C."/>
        </authorList>
    </citation>
    <scope>NUCLEOTIDE SEQUENCE [LARGE SCALE GENOMIC DNA]</scope>
    <source>
        <strain>Berkeley</strain>
    </source>
</reference>
<reference key="3">
    <citation type="journal article" date="2002" name="Genome Biol.">
        <title>Annotation of the Drosophila melanogaster euchromatic genome: a systematic review.</title>
        <authorList>
            <person name="Misra S."/>
            <person name="Crosby M.A."/>
            <person name="Mungall C.J."/>
            <person name="Matthews B.B."/>
            <person name="Campbell K.S."/>
            <person name="Hradecky P."/>
            <person name="Huang Y."/>
            <person name="Kaminker J.S."/>
            <person name="Millburn G.H."/>
            <person name="Prochnik S.E."/>
            <person name="Smith C.D."/>
            <person name="Tupy J.L."/>
            <person name="Whitfield E.J."/>
            <person name="Bayraktaroglu L."/>
            <person name="Berman B.P."/>
            <person name="Bettencourt B.R."/>
            <person name="Celniker S.E."/>
            <person name="de Grey A.D.N.J."/>
            <person name="Drysdale R.A."/>
            <person name="Harris N.L."/>
            <person name="Richter J."/>
            <person name="Russo S."/>
            <person name="Schroeder A.J."/>
            <person name="Shu S.Q."/>
            <person name="Stapleton M."/>
            <person name="Yamada C."/>
            <person name="Ashburner M."/>
            <person name="Gelbart W.M."/>
            <person name="Rubin G.M."/>
            <person name="Lewis S.E."/>
        </authorList>
    </citation>
    <scope>GENOME REANNOTATION</scope>
    <source>
        <strain>Berkeley</strain>
    </source>
</reference>
<reference key="4">
    <citation type="journal article" date="2000" name="Science">
        <title>From sequence to chromosome: the tip of the X chromosome of D. melanogaster.</title>
        <authorList>
            <person name="Benos P.V."/>
            <person name="Gatt M.K."/>
            <person name="Ashburner M."/>
            <person name="Murphy L."/>
            <person name="Harris D."/>
            <person name="Barrell B.G."/>
            <person name="Ferraz C."/>
            <person name="Vidal S."/>
            <person name="Brun C."/>
            <person name="Demailles J."/>
            <person name="Cadieu E."/>
            <person name="Dreano S."/>
            <person name="Gloux S."/>
            <person name="Lelaure V."/>
            <person name="Mottier S."/>
            <person name="Galibert F."/>
            <person name="Borkova D."/>
            <person name="Minana B."/>
            <person name="Kafatos F.C."/>
            <person name="Louis C."/>
            <person name="Siden-Kiamos I."/>
            <person name="Bolshakov S."/>
            <person name="Papagiannakis G."/>
            <person name="Spanos L."/>
            <person name="Cox S."/>
            <person name="Madueno E."/>
            <person name="de Pablos B."/>
            <person name="Modolell J."/>
            <person name="Peter A."/>
            <person name="Schoettler P."/>
            <person name="Werner M."/>
            <person name="Mourkioti F."/>
            <person name="Beinert N."/>
            <person name="Dowe G."/>
            <person name="Schaefer U."/>
            <person name="Jaeckle H."/>
            <person name="Bucheton A."/>
            <person name="Callister D.M."/>
            <person name="Campbell L.A."/>
            <person name="Darlamitsou A."/>
            <person name="Henderson N.S."/>
            <person name="McMillan P.J."/>
            <person name="Salles C."/>
            <person name="Tait E.A."/>
            <person name="Valenti P."/>
            <person name="Saunders R.D.C."/>
            <person name="Glover D.M."/>
        </authorList>
    </citation>
    <scope>NUCLEOTIDE SEQUENCE [LARGE SCALE GENOMIC DNA]</scope>
    <source>
        <strain>Oregon-R</strain>
    </source>
</reference>
<reference key="5">
    <citation type="submission" date="2005-05" db="EMBL/GenBank/DDBJ databases">
        <authorList>
            <person name="Stapleton M."/>
            <person name="Carlson J.W."/>
            <person name="Chavez C."/>
            <person name="Frise E."/>
            <person name="George R.A."/>
            <person name="Pacleb J.M."/>
            <person name="Park S."/>
            <person name="Wan K.H."/>
            <person name="Yu C."/>
            <person name="Celniker S.E."/>
        </authorList>
    </citation>
    <scope>NUCLEOTIDE SEQUENCE [LARGE SCALE MRNA]</scope>
    <source>
        <strain>Berkeley</strain>
        <tissue>Head</tissue>
    </source>
</reference>
<reference key="6">
    <citation type="journal article" date="2005" name="Neuron">
        <title>PDF receptor signaling in Drosophila contributes to both circadian and geotactic behaviors.</title>
        <authorList>
            <person name="Mertens I."/>
            <person name="Vandingenen A."/>
            <person name="Johnson E.C."/>
            <person name="Shafer O.T."/>
            <person name="Li W."/>
            <person name="Trigg J.S."/>
            <person name="De Loof A."/>
            <person name="Schoofs L."/>
            <person name="Taghert P.H."/>
        </authorList>
    </citation>
    <scope>FUNCTION</scope>
    <scope>TISSUE SPECIFICITY</scope>
    <scope>DEVELOPMENTAL STAGE</scope>
</reference>
<reference key="7">
    <citation type="journal article" date="2005" name="Neuron">
        <title>A G protein-coupled receptor, groom-of-PDF, is required for PDF neuron action in circadian behavior.</title>
        <authorList>
            <person name="Lear B.C."/>
            <person name="Merrill C.E."/>
            <person name="Lin J.-M."/>
            <person name="Schroeder A."/>
            <person name="Zhang L."/>
            <person name="Allada R."/>
        </authorList>
    </citation>
    <scope>FUNCTION</scope>
    <scope>TISSUE SPECIFICITY</scope>
</reference>
<reference key="8">
    <citation type="journal article" date="2005" name="Neuron">
        <title>Drosophila GPCR Han is a receptor for the circadian clock neuropeptide PDF.</title>
        <authorList>
            <person name="Hyun S."/>
            <person name="Lee Y."/>
            <person name="Hong S.-T."/>
            <person name="Bang S."/>
            <person name="Paik D."/>
            <person name="Kang J."/>
            <person name="Shin J."/>
            <person name="Lee J."/>
            <person name="Jeon K."/>
            <person name="Hwang S."/>
            <person name="Bae E."/>
            <person name="Kim J."/>
        </authorList>
    </citation>
    <scope>FUNCTION</scope>
    <scope>TISSUE SPECIFICITY</scope>
    <scope>DEVELOPMENTAL STAGE</scope>
</reference>
<reference key="9">
    <citation type="journal article" date="2008" name="Neuron">
        <title>PDF cells are a GABA-responsive wake-promoting component of the Drosophila sleep circuit.</title>
        <authorList>
            <person name="Parisky K.M."/>
            <person name="Agosto J."/>
            <person name="Pulver S.R."/>
            <person name="Shang Y."/>
            <person name="Kuklin E."/>
            <person name="Hodge J.J."/>
            <person name="Kang K."/>
            <person name="Kang K."/>
            <person name="Liu X."/>
            <person name="Garrity P.A."/>
            <person name="Rosbash M."/>
            <person name="Griffith L.C."/>
        </authorList>
    </citation>
    <scope>FUNCTION</scope>
    <scope>DISRUPTION PHENOTYPE</scope>
</reference>
<reference key="10">
    <citation type="journal article" date="2009" name="Curr. Biol.">
        <title>The GABA(A) receptor RDL acts in peptidergic PDF neurons to promote sleep in Drosophila.</title>
        <authorList>
            <person name="Chung B.Y."/>
            <person name="Kilman V.L."/>
            <person name="Keath J.R."/>
            <person name="Pitman J.L."/>
            <person name="Allada R."/>
        </authorList>
    </citation>
    <scope>FUNCTION</scope>
</reference>
<sequence>MTLLSNILDCGGCISAQRFTRLLRQSGSSGPSPSAPTAGTFESKSMLEPTSSHSLATGRVPLLHDFDASTTESPGTYVLDGVARVAQLALEPTVMDALPDSDTEQVLGNLNSSAPWNLTLASAAATNFENCSALFVNYTLPQTGLYCNWTWDTLLCWPPTPAGVLARMNCPGGFHGVDTRKFAIRKCELDGRWGSRPNATEVNPPGWTDYGPCYKPEIIRLMQQMGSKDFDAYIDIARRTRTLEIVGLCLSLFALIVSLLIFCTFRSLRNNRTKIHKNLFVAMVLQVIIRLTLYLDQFRRGNKEAATNTSLSVIENTPYLCEASYVLLEYARTAMFMWMFIEGLYLHNMVTVAVFQGSFPLKFFSRLGWCVPILMTTVWARCTVMYMDTSLGECLWNYNLTPYYWILEGPRLAVILLNFCFLVNIIRVLVMKLRQSQASDIEQTRKAVRAAIVLLPLLGITNLLHQLAPLKTATNFAVWSYGTHFLTSFQGFFIALIYCFLNGEVRAVLLKSLATQLSVRGHPEWAPKRASMYSGAYNTAPDTDAVQPAGDPSATGKRISPPNKRLNGRKPSSASIVMIHEPQQRQRLMPRLQNKAREKGKDRVEKTDAEAEPDPTISHIHSKEAGSARSRTRGSKWIMGICFRGQKVLRVPSASSVPPESVVFELSEQ</sequence>
<accession>Q9W4Y2</accession>
<accession>A0A158RFU8</accession>
<accession>M9NET6</accession>
<accession>Q9NEF7</accession>
<accession>X2JDL2</accession>
<comment type="function">
    <text evidence="4 5 6 7 8">Receptor for PDF, a neuropeptide controlling circadian behavioral rhythms. Probably regulates circadian behavioral rhythms through coordination of activities of clock neurons. PDF-binding results in the elevation of cAMP synthesis. Plays a role in sleep regulation and regulates the state transition from sleep to wake (PubMed:19038223, PubMed:19230663).</text>
</comment>
<comment type="subcellular location">
    <subcellularLocation>
        <location evidence="1">Cell membrane</location>
        <topology evidence="1">Multi-pass membrane protein</topology>
    </subcellularLocation>
</comment>
<comment type="alternative products">
    <event type="alternative splicing"/>
    <isoform>
        <id>Q9W4Y2-1</id>
        <name evidence="11">A</name>
        <sequence type="displayed"/>
    </isoform>
    <isoform>
        <id>Q9W4Y2-2</id>
        <name evidence="11">C</name>
        <name evidence="11">D</name>
        <sequence type="described" ref="VSP_061203"/>
    </isoform>
    <isoform>
        <id>Q9W4Y2-3</id>
        <name evidence="11">B</name>
        <sequence type="described" ref="VSP_061202"/>
    </isoform>
</comment>
<comment type="tissue specificity">
    <text evidence="4 5 6">Mainly present in clock neurons of the brain. Localizes in all 4 s-LNv neurons, 1 LNd neuron, 7 DN1 neurons, and 1 DN3 neuron. In addition to the clock neurons, it is also present in approximately 13 pairs of neurons along the ventral nerve cord in third instar larvae, which do not overlap with dopaminergic or serotonergic neurons. Not present in DN2 neurons (at protein level).</text>
</comment>
<comment type="developmental stage">
    <text evidence="4 6">Not expressed in embryos. Does not exhibit diurnal or circadian variation.</text>
</comment>
<comment type="disruption phenotype">
    <text evidence="7">RNAi-mediated knockdown in small and large ventral lateral neurons increases total sleep in both the day-time and the nighttime and decreases sleep latency during daytime only.</text>
</comment>
<comment type="similarity">
    <text evidence="9">Belongs to the G-protein coupled receptor 2 family.</text>
</comment>
<comment type="sequence caution" evidence="9">
    <conflict type="erroneous gene model prediction">
        <sequence resource="EMBL-CDS" id="CAB72288"/>
    </conflict>
</comment>
<organism>
    <name type="scientific">Drosophila melanogaster</name>
    <name type="common">Fruit fly</name>
    <dbReference type="NCBI Taxonomy" id="7227"/>
    <lineage>
        <taxon>Eukaryota</taxon>
        <taxon>Metazoa</taxon>
        <taxon>Ecdysozoa</taxon>
        <taxon>Arthropoda</taxon>
        <taxon>Hexapoda</taxon>
        <taxon>Insecta</taxon>
        <taxon>Pterygota</taxon>
        <taxon>Neoptera</taxon>
        <taxon>Endopterygota</taxon>
        <taxon>Diptera</taxon>
        <taxon>Brachycera</taxon>
        <taxon>Muscomorpha</taxon>
        <taxon>Ephydroidea</taxon>
        <taxon>Drosophilidae</taxon>
        <taxon>Drosophila</taxon>
        <taxon>Sophophora</taxon>
    </lineage>
</organism>
<gene>
    <name evidence="11" type="primary">Pdfr</name>
    <name evidence="11" type="synonym">gop</name>
    <name evidence="11" type="synonym">Han</name>
    <name evidence="11" type="ORF">CG13758</name>
</gene>
<keyword id="KW-0025">Alternative splicing</keyword>
<keyword id="KW-0090">Biological rhythms</keyword>
<keyword id="KW-1003">Cell membrane</keyword>
<keyword id="KW-0297">G-protein coupled receptor</keyword>
<keyword id="KW-0325">Glycoprotein</keyword>
<keyword id="KW-0472">Membrane</keyword>
<keyword id="KW-0675">Receptor</keyword>
<keyword id="KW-1185">Reference proteome</keyword>
<keyword id="KW-0807">Transducer</keyword>
<keyword id="KW-0812">Transmembrane</keyword>
<keyword id="KW-1133">Transmembrane helix</keyword>
<protein>
    <recommendedName>
        <fullName>PDF receptor</fullName>
    </recommendedName>
    <alternativeName>
        <fullName evidence="11">Pigment-dispersing factor receptor</fullName>
    </alternativeName>
    <alternativeName>
        <fullName>Protein groom-of-PDF</fullName>
    </alternativeName>
</protein>
<name>PDFR_DROME</name>
<dbReference type="EMBL" id="AY661807">
    <property type="protein sequence ID" value="AAT84083.1"/>
    <property type="molecule type" value="mRNA"/>
</dbReference>
<dbReference type="EMBL" id="AE014298">
    <property type="protein sequence ID" value="AAF45788.2"/>
    <property type="molecule type" value="Genomic_DNA"/>
</dbReference>
<dbReference type="EMBL" id="AE014298">
    <property type="protein sequence ID" value="AHN59297.1"/>
    <property type="molecule type" value="Genomic_DNA"/>
</dbReference>
<dbReference type="EMBL" id="AE014298">
    <property type="protein sequence ID" value="AHN59298.1"/>
    <property type="molecule type" value="Genomic_DNA"/>
</dbReference>
<dbReference type="EMBL" id="AE014298">
    <property type="protein sequence ID" value="AFH07215.1"/>
    <property type="molecule type" value="Genomic_DNA"/>
</dbReference>
<dbReference type="EMBL" id="AL138972">
    <property type="protein sequence ID" value="CAB72288.1"/>
    <property type="status" value="ALT_SEQ"/>
    <property type="molecule type" value="Genomic_DNA"/>
</dbReference>
<dbReference type="EMBL" id="BT022705">
    <property type="protein sequence ID" value="AAY55121.1"/>
    <property type="molecule type" value="mRNA"/>
</dbReference>
<dbReference type="RefSeq" id="NP_001245501.1">
    <molecule id="Q9W4Y2-3"/>
    <property type="nucleotide sequence ID" value="NM_001258572.1"/>
</dbReference>
<dbReference type="RefSeq" id="NP_001284826.1">
    <molecule id="Q9W4Y2-2"/>
    <property type="nucleotide sequence ID" value="NM_001297897.1"/>
</dbReference>
<dbReference type="RefSeq" id="NP_001284827.1">
    <molecule id="Q9W4Y2-2"/>
    <property type="nucleotide sequence ID" value="NM_001297898.1"/>
</dbReference>
<dbReference type="RefSeq" id="NP_570007.2">
    <molecule id="Q9W4Y2-1"/>
    <property type="nucleotide sequence ID" value="NM_130651.3"/>
</dbReference>
<dbReference type="SMR" id="Q9W4Y2"/>
<dbReference type="BioGRID" id="57768">
    <property type="interactions" value="6"/>
</dbReference>
<dbReference type="FunCoup" id="Q9W4Y2">
    <property type="interactions" value="20"/>
</dbReference>
<dbReference type="STRING" id="7227.FBpp0300789"/>
<dbReference type="TCDB" id="9.A.14.4.2">
    <property type="family name" value="the g-protein-coupled receptor (gpcr) family"/>
</dbReference>
<dbReference type="GlyCosmos" id="Q9W4Y2">
    <property type="glycosylation" value="7 sites, No reported glycans"/>
</dbReference>
<dbReference type="GlyGen" id="Q9W4Y2">
    <property type="glycosylation" value="9 sites"/>
</dbReference>
<dbReference type="PaxDb" id="7227-FBpp0300789"/>
<dbReference type="DNASU" id="31234"/>
<dbReference type="EnsemblMetazoa" id="FBtr0070436">
    <molecule id="Q9W4Y2-1"/>
    <property type="protein sequence ID" value="FBpp0099841"/>
    <property type="gene ID" value="FBgn0260753"/>
</dbReference>
<dbReference type="EnsemblMetazoa" id="FBtr0308565">
    <molecule id="Q9W4Y2-3"/>
    <property type="protein sequence ID" value="FBpp0300789"/>
    <property type="gene ID" value="FBgn0260753"/>
</dbReference>
<dbReference type="EnsemblMetazoa" id="FBtr0340084">
    <molecule id="Q9W4Y2-2"/>
    <property type="protein sequence ID" value="FBpp0309083"/>
    <property type="gene ID" value="FBgn0260753"/>
</dbReference>
<dbReference type="EnsemblMetazoa" id="FBtr0340085">
    <molecule id="Q9W4Y2-2"/>
    <property type="protein sequence ID" value="FBpp0309084"/>
    <property type="gene ID" value="FBgn0260753"/>
</dbReference>
<dbReference type="GeneID" id="31234"/>
<dbReference type="KEGG" id="dme:Dmel_CG13758"/>
<dbReference type="AGR" id="FB:FBgn0260753"/>
<dbReference type="CTD" id="31234"/>
<dbReference type="FlyBase" id="FBgn0260753">
    <property type="gene designation" value="Pdfr"/>
</dbReference>
<dbReference type="VEuPathDB" id="VectorBase:FBgn0260753"/>
<dbReference type="eggNOG" id="KOG4564">
    <property type="taxonomic scope" value="Eukaryota"/>
</dbReference>
<dbReference type="GeneTree" id="ENSGT00940000167994"/>
<dbReference type="HOGENOM" id="CLU_002753_4_7_1"/>
<dbReference type="InParanoid" id="Q9W4Y2"/>
<dbReference type="OMA" id="ARMHCPA"/>
<dbReference type="OrthoDB" id="5967113at2759"/>
<dbReference type="PhylomeDB" id="Q9W4Y2"/>
<dbReference type="BioGRID-ORCS" id="31234">
    <property type="hits" value="0 hits in 1 CRISPR screen"/>
</dbReference>
<dbReference type="GenomeRNAi" id="31234"/>
<dbReference type="PRO" id="PR:Q9W4Y2"/>
<dbReference type="Proteomes" id="UP000000803">
    <property type="component" value="Chromosome X"/>
</dbReference>
<dbReference type="Bgee" id="FBgn0260753">
    <property type="expression patterns" value="Expressed in lamina monopolar neuron L3 (Drosophila) in insect head and 175 other cell types or tissues"/>
</dbReference>
<dbReference type="ExpressionAtlas" id="Q9W4Y2">
    <property type="expression patterns" value="baseline and differential"/>
</dbReference>
<dbReference type="GO" id="GO:0016020">
    <property type="term" value="C:membrane"/>
    <property type="evidence" value="ECO:0000250"/>
    <property type="project" value="FlyBase"/>
</dbReference>
<dbReference type="GO" id="GO:0043005">
    <property type="term" value="C:neuron projection"/>
    <property type="evidence" value="ECO:0000314"/>
    <property type="project" value="FlyBase"/>
</dbReference>
<dbReference type="GO" id="GO:0043025">
    <property type="term" value="C:neuronal cell body"/>
    <property type="evidence" value="ECO:0000314"/>
    <property type="project" value="FlyBase"/>
</dbReference>
<dbReference type="GO" id="GO:0005886">
    <property type="term" value="C:plasma membrane"/>
    <property type="evidence" value="ECO:0000314"/>
    <property type="project" value="FlyBase"/>
</dbReference>
<dbReference type="GO" id="GO:0004948">
    <property type="term" value="F:calcitonin receptor activity"/>
    <property type="evidence" value="ECO:0000250"/>
    <property type="project" value="FlyBase"/>
</dbReference>
<dbReference type="GO" id="GO:0008528">
    <property type="term" value="F:G protein-coupled peptide receptor activity"/>
    <property type="evidence" value="ECO:0000318"/>
    <property type="project" value="GO_Central"/>
</dbReference>
<dbReference type="GO" id="GO:0008188">
    <property type="term" value="F:neuropeptide receptor activity"/>
    <property type="evidence" value="ECO:0000353"/>
    <property type="project" value="UniProtKB"/>
</dbReference>
<dbReference type="GO" id="GO:0007189">
    <property type="term" value="P:adenylate cyclase-activating G protein-coupled receptor signaling pathway"/>
    <property type="evidence" value="ECO:0000314"/>
    <property type="project" value="FlyBase"/>
</dbReference>
<dbReference type="GO" id="GO:0007188">
    <property type="term" value="P:adenylate cyclase-modulating G protein-coupled receptor signaling pathway"/>
    <property type="evidence" value="ECO:0000318"/>
    <property type="project" value="GO_Central"/>
</dbReference>
<dbReference type="GO" id="GO:0007166">
    <property type="term" value="P:cell surface receptor signaling pathway"/>
    <property type="evidence" value="ECO:0007669"/>
    <property type="project" value="InterPro"/>
</dbReference>
<dbReference type="GO" id="GO:0048512">
    <property type="term" value="P:circadian behavior"/>
    <property type="evidence" value="ECO:0000314"/>
    <property type="project" value="FlyBase"/>
</dbReference>
<dbReference type="GO" id="GO:0007623">
    <property type="term" value="P:circadian rhythm"/>
    <property type="evidence" value="ECO:0000314"/>
    <property type="project" value="FlyBase"/>
</dbReference>
<dbReference type="GO" id="GO:0042745">
    <property type="term" value="P:circadian sleep/wake cycle"/>
    <property type="evidence" value="ECO:0000315"/>
    <property type="project" value="FlyBase"/>
</dbReference>
<dbReference type="GO" id="GO:0060086">
    <property type="term" value="P:circadian temperature homeostasis"/>
    <property type="evidence" value="ECO:0000315"/>
    <property type="project" value="FlyBase"/>
</dbReference>
<dbReference type="GO" id="GO:0055070">
    <property type="term" value="P:copper ion homeostasis"/>
    <property type="evidence" value="ECO:0000315"/>
    <property type="project" value="FlyBase"/>
</dbReference>
<dbReference type="GO" id="GO:0007186">
    <property type="term" value="P:G protein-coupled receptor signaling pathway"/>
    <property type="evidence" value="ECO:0000250"/>
    <property type="project" value="FlyBase"/>
</dbReference>
<dbReference type="GO" id="GO:0042332">
    <property type="term" value="P:gravitaxis"/>
    <property type="evidence" value="ECO:0000314"/>
    <property type="project" value="FlyBase"/>
</dbReference>
<dbReference type="GO" id="GO:0045475">
    <property type="term" value="P:locomotor rhythm"/>
    <property type="evidence" value="ECO:0000315"/>
    <property type="project" value="FlyBase"/>
</dbReference>
<dbReference type="GO" id="GO:0007218">
    <property type="term" value="P:neuropeptide signaling pathway"/>
    <property type="evidence" value="ECO:0000314"/>
    <property type="project" value="UniProtKB"/>
</dbReference>
<dbReference type="GO" id="GO:0050850">
    <property type="term" value="P:positive regulation of calcium-mediated signaling"/>
    <property type="evidence" value="ECO:0000316"/>
    <property type="project" value="FlyBase"/>
</dbReference>
<dbReference type="GO" id="GO:0042752">
    <property type="term" value="P:regulation of circadian rhythm"/>
    <property type="evidence" value="ECO:0000315"/>
    <property type="project" value="FlyBase"/>
</dbReference>
<dbReference type="GO" id="GO:0042749">
    <property type="term" value="P:regulation of circadian sleep/wake cycle"/>
    <property type="evidence" value="ECO:0000315"/>
    <property type="project" value="FlyBase"/>
</dbReference>
<dbReference type="GO" id="GO:1901562">
    <property type="term" value="P:response to paraquat"/>
    <property type="evidence" value="ECO:0000315"/>
    <property type="project" value="FlyBase"/>
</dbReference>
<dbReference type="CDD" id="cd15261">
    <property type="entry name" value="7tmB1_PDFR"/>
    <property type="match status" value="1"/>
</dbReference>
<dbReference type="FunFam" id="4.10.1240.10:FF:000029">
    <property type="entry name" value="PDF receptor isoform X3"/>
    <property type="match status" value="1"/>
</dbReference>
<dbReference type="FunFam" id="1.20.1070.10:FF:000574">
    <property type="entry name" value="Pigment-dispersing factor receptor, isoform C"/>
    <property type="match status" value="1"/>
</dbReference>
<dbReference type="Gene3D" id="4.10.1240.10">
    <property type="entry name" value="GPCR, family 2, extracellular hormone receptor domain"/>
    <property type="match status" value="1"/>
</dbReference>
<dbReference type="Gene3D" id="1.20.1070.10">
    <property type="entry name" value="Rhodopsin 7-helix transmembrane proteins"/>
    <property type="match status" value="1"/>
</dbReference>
<dbReference type="InterPro" id="IPR050332">
    <property type="entry name" value="GPCR_2"/>
</dbReference>
<dbReference type="InterPro" id="IPR017981">
    <property type="entry name" value="GPCR_2-like_7TM"/>
</dbReference>
<dbReference type="InterPro" id="IPR036445">
    <property type="entry name" value="GPCR_2_extracell_dom_sf"/>
</dbReference>
<dbReference type="InterPro" id="IPR001879">
    <property type="entry name" value="GPCR_2_extracellular_dom"/>
</dbReference>
<dbReference type="InterPro" id="IPR000832">
    <property type="entry name" value="GPCR_2_secretin-like"/>
</dbReference>
<dbReference type="InterPro" id="IPR017983">
    <property type="entry name" value="GPCR_2_secretin-like_CS"/>
</dbReference>
<dbReference type="PANTHER" id="PTHR45620:SF17">
    <property type="entry name" value="PDF RECEPTOR"/>
    <property type="match status" value="1"/>
</dbReference>
<dbReference type="PANTHER" id="PTHR45620">
    <property type="entry name" value="PDF RECEPTOR-LIKE PROTEIN-RELATED"/>
    <property type="match status" value="1"/>
</dbReference>
<dbReference type="Pfam" id="PF00002">
    <property type="entry name" value="7tm_2"/>
    <property type="match status" value="1"/>
</dbReference>
<dbReference type="Pfam" id="PF02793">
    <property type="entry name" value="HRM"/>
    <property type="match status" value="1"/>
</dbReference>
<dbReference type="PRINTS" id="PR00249">
    <property type="entry name" value="GPCRSECRETIN"/>
</dbReference>
<dbReference type="SMART" id="SM00008">
    <property type="entry name" value="HormR"/>
    <property type="match status" value="1"/>
</dbReference>
<dbReference type="SUPFAM" id="SSF111418">
    <property type="entry name" value="Hormone receptor domain"/>
    <property type="match status" value="1"/>
</dbReference>
<dbReference type="PROSITE" id="PS00649">
    <property type="entry name" value="G_PROTEIN_RECEP_F2_1"/>
    <property type="match status" value="1"/>
</dbReference>
<dbReference type="PROSITE" id="PS00650">
    <property type="entry name" value="G_PROTEIN_RECEP_F2_2"/>
    <property type="match status" value="1"/>
</dbReference>
<dbReference type="PROSITE" id="PS50227">
    <property type="entry name" value="G_PROTEIN_RECEP_F2_3"/>
    <property type="match status" value="1"/>
</dbReference>
<dbReference type="PROSITE" id="PS50261">
    <property type="entry name" value="G_PROTEIN_RECEP_F2_4"/>
    <property type="match status" value="1"/>
</dbReference>
<evidence type="ECO:0000250" key="1"/>
<evidence type="ECO:0000255" key="2"/>
<evidence type="ECO:0000256" key="3">
    <source>
        <dbReference type="SAM" id="MobiDB-lite"/>
    </source>
</evidence>
<evidence type="ECO:0000269" key="4">
    <source>
    </source>
</evidence>
<evidence type="ECO:0000269" key="5">
    <source>
    </source>
</evidence>
<evidence type="ECO:0000269" key="6">
    <source>
    </source>
</evidence>
<evidence type="ECO:0000269" key="7">
    <source>
    </source>
</evidence>
<evidence type="ECO:0000269" key="8">
    <source>
    </source>
</evidence>
<evidence type="ECO:0000305" key="9"/>
<evidence type="ECO:0000312" key="10">
    <source>
        <dbReference type="EMBL" id="AAT84083.1"/>
    </source>
</evidence>
<evidence type="ECO:0000312" key="11">
    <source>
        <dbReference type="FlyBase" id="FBgn0260753"/>
    </source>
</evidence>
<feature type="chain" id="PRO_0000070346" description="PDF receptor">
    <location>
        <begin position="1"/>
        <end position="669"/>
    </location>
</feature>
<feature type="topological domain" description="Extracellular" evidence="2">
    <location>
        <begin position="1"/>
        <end position="244"/>
    </location>
</feature>
<feature type="transmembrane region" description="Helical; Name=1" evidence="2">
    <location>
        <begin position="245"/>
        <end position="265"/>
    </location>
</feature>
<feature type="topological domain" description="Cytoplasmic" evidence="2">
    <location>
        <begin position="266"/>
        <end position="274"/>
    </location>
</feature>
<feature type="transmembrane region" description="Helical; Name=2" evidence="2">
    <location>
        <begin position="275"/>
        <end position="295"/>
    </location>
</feature>
<feature type="topological domain" description="Extracellular" evidence="2">
    <location>
        <begin position="296"/>
        <end position="334"/>
    </location>
</feature>
<feature type="transmembrane region" description="Helical; Name=3" evidence="2">
    <location>
        <begin position="335"/>
        <end position="355"/>
    </location>
</feature>
<feature type="topological domain" description="Cytoplasmic" evidence="2">
    <location>
        <begin position="356"/>
        <end position="366"/>
    </location>
</feature>
<feature type="transmembrane region" description="Helical; Name=4" evidence="2">
    <location>
        <begin position="367"/>
        <end position="387"/>
    </location>
</feature>
<feature type="topological domain" description="Extracellular" evidence="2">
    <location>
        <begin position="388"/>
        <end position="411"/>
    </location>
</feature>
<feature type="transmembrane region" description="Helical; Name=5" evidence="2">
    <location>
        <begin position="412"/>
        <end position="432"/>
    </location>
</feature>
<feature type="topological domain" description="Cytoplasmic" evidence="2">
    <location>
        <begin position="433"/>
        <end position="449"/>
    </location>
</feature>
<feature type="transmembrane region" description="Helical; Name=6" evidence="2">
    <location>
        <begin position="450"/>
        <end position="470"/>
    </location>
</feature>
<feature type="topological domain" description="Extracellular" evidence="2">
    <location>
        <begin position="471"/>
        <end position="480"/>
    </location>
</feature>
<feature type="transmembrane region" description="Helical; Name=7" evidence="2">
    <location>
        <begin position="481"/>
        <end position="501"/>
    </location>
</feature>
<feature type="topological domain" description="Cytoplasmic" evidence="2">
    <location>
        <begin position="502"/>
        <end position="669"/>
    </location>
</feature>
<feature type="region of interest" description="Disordered" evidence="3">
    <location>
        <begin position="24"/>
        <end position="52"/>
    </location>
</feature>
<feature type="region of interest" description="Disordered" evidence="3">
    <location>
        <begin position="536"/>
        <end position="573"/>
    </location>
</feature>
<feature type="region of interest" description="Disordered" evidence="3">
    <location>
        <begin position="590"/>
        <end position="614"/>
    </location>
</feature>
<feature type="compositionally biased region" description="Low complexity" evidence="3">
    <location>
        <begin position="26"/>
        <end position="40"/>
    </location>
</feature>
<feature type="compositionally biased region" description="Basic and acidic residues" evidence="3">
    <location>
        <begin position="595"/>
        <end position="609"/>
    </location>
</feature>
<feature type="glycosylation site" description="N-linked (GlcNAc...) asparagine" evidence="2">
    <location>
        <position position="111"/>
    </location>
</feature>
<feature type="glycosylation site" description="N-linked (GlcNAc...) asparagine" evidence="2">
    <location>
        <position position="117"/>
    </location>
</feature>
<feature type="glycosylation site" description="N-linked (GlcNAc...) asparagine" evidence="2">
    <location>
        <position position="130"/>
    </location>
</feature>
<feature type="glycosylation site" description="N-linked (GlcNAc...) asparagine" evidence="2">
    <location>
        <position position="137"/>
    </location>
</feature>
<feature type="glycosylation site" description="N-linked (GlcNAc...) asparagine" evidence="2">
    <location>
        <position position="148"/>
    </location>
</feature>
<feature type="glycosylation site" description="N-linked (GlcNAc...) asparagine" evidence="2">
    <location>
        <position position="198"/>
    </location>
</feature>
<feature type="glycosylation site" description="N-linked (GlcNAc...) asparagine" evidence="2">
    <location>
        <position position="308"/>
    </location>
</feature>
<feature type="splice variant" id="VSP_061202" description="In isoform B." evidence="9">
    <original>M</original>
    <variation>MGAGNRKSETKTKTEAEIEIEMERDQFSIAANACMSMGPMLISKDKAPCSGGRVRHADSLHIYYAVDGKM</variation>
    <location>
        <position position="1"/>
    </location>
</feature>
<feature type="splice variant" id="VSP_061203" description="In isoform C." evidence="9">
    <original>QKVLRVPSASSVPPESVVFELSEQ</original>
    <variation>QKDKCVMPGSQKTQQIFMTSQMPPTSTLAAVATTITTTSTTTTAAKTTIASIATIATMTKSKAKAKAISKSHQIQMPKA</variation>
    <location>
        <begin position="646"/>
        <end position="669"/>
    </location>
</feature>